<name>RRP42_SACI3</name>
<evidence type="ECO:0000255" key="1">
    <source>
        <dbReference type="HAMAP-Rule" id="MF_00622"/>
    </source>
</evidence>
<gene>
    <name evidence="1" type="primary">rrp42</name>
    <name type="ordered locus">M1627_1457</name>
</gene>
<feature type="chain" id="PRO_1000212289" description="Exosome complex component Rrp42">
    <location>
        <begin position="1"/>
        <end position="275"/>
    </location>
</feature>
<organism>
    <name type="scientific">Saccharolobus islandicus (strain M.16.27)</name>
    <name type="common">Sulfolobus islandicus</name>
    <dbReference type="NCBI Taxonomy" id="427318"/>
    <lineage>
        <taxon>Archaea</taxon>
        <taxon>Thermoproteota</taxon>
        <taxon>Thermoprotei</taxon>
        <taxon>Sulfolobales</taxon>
        <taxon>Sulfolobaceae</taxon>
        <taxon>Saccharolobus</taxon>
    </lineage>
</organism>
<dbReference type="EMBL" id="CP001401">
    <property type="protein sequence ID" value="ACP55339.1"/>
    <property type="molecule type" value="Genomic_DNA"/>
</dbReference>
<dbReference type="RefSeq" id="WP_012711405.1">
    <property type="nucleotide sequence ID" value="NC_012632.1"/>
</dbReference>
<dbReference type="SMR" id="C3N5R4"/>
<dbReference type="GeneID" id="84058768"/>
<dbReference type="KEGG" id="sim:M1627_1457"/>
<dbReference type="HOGENOM" id="CLU_038194_0_0_2"/>
<dbReference type="Proteomes" id="UP000002307">
    <property type="component" value="Chromosome"/>
</dbReference>
<dbReference type="GO" id="GO:0000177">
    <property type="term" value="C:cytoplasmic exosome (RNase complex)"/>
    <property type="evidence" value="ECO:0007669"/>
    <property type="project" value="TreeGrafter"/>
</dbReference>
<dbReference type="GO" id="GO:0035925">
    <property type="term" value="F:mRNA 3'-UTR AU-rich region binding"/>
    <property type="evidence" value="ECO:0007669"/>
    <property type="project" value="TreeGrafter"/>
</dbReference>
<dbReference type="GO" id="GO:0016075">
    <property type="term" value="P:rRNA catabolic process"/>
    <property type="evidence" value="ECO:0007669"/>
    <property type="project" value="TreeGrafter"/>
</dbReference>
<dbReference type="CDD" id="cd11365">
    <property type="entry name" value="RNase_PH_archRRP42"/>
    <property type="match status" value="1"/>
</dbReference>
<dbReference type="FunFam" id="3.30.230.70:FF:000017">
    <property type="entry name" value="Exosome complex component Rrp42"/>
    <property type="match status" value="1"/>
</dbReference>
<dbReference type="Gene3D" id="3.30.230.70">
    <property type="entry name" value="GHMP Kinase, N-terminal domain"/>
    <property type="match status" value="1"/>
</dbReference>
<dbReference type="HAMAP" id="MF_00622">
    <property type="entry name" value="Exosome_Rrp42"/>
    <property type="match status" value="1"/>
</dbReference>
<dbReference type="InterPro" id="IPR001247">
    <property type="entry name" value="ExoRNase_PH_dom1"/>
</dbReference>
<dbReference type="InterPro" id="IPR015847">
    <property type="entry name" value="ExoRNase_PH_dom2"/>
</dbReference>
<dbReference type="InterPro" id="IPR036345">
    <property type="entry name" value="ExoRNase_PH_dom2_sf"/>
</dbReference>
<dbReference type="InterPro" id="IPR050590">
    <property type="entry name" value="Exosome_comp_Rrp42_subfam"/>
</dbReference>
<dbReference type="InterPro" id="IPR027408">
    <property type="entry name" value="PNPase/RNase_PH_dom_sf"/>
</dbReference>
<dbReference type="InterPro" id="IPR020568">
    <property type="entry name" value="Ribosomal_Su5_D2-typ_SF"/>
</dbReference>
<dbReference type="InterPro" id="IPR020869">
    <property type="entry name" value="Rrp42_archaea"/>
</dbReference>
<dbReference type="NCBIfam" id="NF003282">
    <property type="entry name" value="PRK04282.1-1"/>
    <property type="match status" value="1"/>
</dbReference>
<dbReference type="PANTHER" id="PTHR11097:SF8">
    <property type="entry name" value="EXOSOME COMPLEX COMPONENT RRP42"/>
    <property type="match status" value="1"/>
</dbReference>
<dbReference type="PANTHER" id="PTHR11097">
    <property type="entry name" value="EXOSOME COMPLEX EXONUCLEASE RIBOSOMAL RNA PROCESSING PROTEIN"/>
    <property type="match status" value="1"/>
</dbReference>
<dbReference type="Pfam" id="PF01138">
    <property type="entry name" value="RNase_PH"/>
    <property type="match status" value="1"/>
</dbReference>
<dbReference type="Pfam" id="PF03725">
    <property type="entry name" value="RNase_PH_C"/>
    <property type="match status" value="1"/>
</dbReference>
<dbReference type="SUPFAM" id="SSF55666">
    <property type="entry name" value="Ribonuclease PH domain 2-like"/>
    <property type="match status" value="1"/>
</dbReference>
<dbReference type="SUPFAM" id="SSF54211">
    <property type="entry name" value="Ribosomal protein S5 domain 2-like"/>
    <property type="match status" value="1"/>
</dbReference>
<proteinExistence type="inferred from homology"/>
<reference key="1">
    <citation type="journal article" date="2009" name="Proc. Natl. Acad. Sci. U.S.A.">
        <title>Biogeography of the Sulfolobus islandicus pan-genome.</title>
        <authorList>
            <person name="Reno M.L."/>
            <person name="Held N.L."/>
            <person name="Fields C.J."/>
            <person name="Burke P.V."/>
            <person name="Whitaker R.J."/>
        </authorList>
    </citation>
    <scope>NUCLEOTIDE SEQUENCE [LARGE SCALE GENOMIC DNA]</scope>
    <source>
        <strain>M.16.27</strain>
    </source>
</reference>
<sequence>MSSTPSNQNIIPLIKKESIVSLFEKGTRQDGRKLTDYRPLSITLDYAKKADGSALVKLGTTMVLAGTKLEIDKPYEDTPNQGNLIVNVELLPLAYETFEPGPPDENAIELARVVDRSLRDSKALDLTKLVIEPGKSVWTVWLDVYVLDYGGNVLDACTLASVAALHNTKVYKVEQDSNGFRVNKNEVVGKLPLNHPVVTVSIAKVDKYLIVDPDLDEESIMDTKVSFSYTPDLKIVGIQKSGKGSMSLQDIDQAENTARLVAVKLLEELKKQLGI</sequence>
<keyword id="KW-0963">Cytoplasm</keyword>
<keyword id="KW-0271">Exosome</keyword>
<protein>
    <recommendedName>
        <fullName evidence="1">Exosome complex component Rrp42</fullName>
    </recommendedName>
</protein>
<comment type="function">
    <text evidence="1">Non-catalytic component of the exosome, which is a complex involved in RNA degradation. Contributes to the structuring of the Rrp41 active site.</text>
</comment>
<comment type="subunit">
    <text evidence="1">Component of the archaeal exosome complex. Forms a hexameric ring-like arrangement composed of 3 Rrp41-Rrp42 heterodimers. The hexameric ring associates with a trimer of Rrp4 and/or Csl4 subunits.</text>
</comment>
<comment type="subcellular location">
    <subcellularLocation>
        <location evidence="1">Cytoplasm</location>
    </subcellularLocation>
</comment>
<comment type="similarity">
    <text evidence="1">Belongs to the RNase PH family. Rrp42 subfamily.</text>
</comment>
<accession>C3N5R4</accession>